<keyword id="KW-0963">Cytoplasm</keyword>
<keyword id="KW-0378">Hydrolase</keyword>
<keyword id="KW-1185">Reference proteome</keyword>
<sequence>MSKVKSITRESWILSTFPEWGSWLNEEIEQEQVAPGTFAMWWLGCTGIWLKSEGGANVCVDFWCGTGKQSHGNPLMKQGHQMQRMAGVKKLQPNLRTTPFVLDPFAIRQIDAVLATHDHNDHIDVNVAAAVMQNCADDVPFIGPKTCVDLWIGWGVPKERCIVVKPGDVVKVKDIEIHALDAFDRTALITLPADQKAAGVLPDGMDDRAVNYLFKTPGGTLYHSGDSHYSNYYAKHGNEHQIDVALGSYGENPRGITDKMTSADILRMGEALNAKVVIPFHHDIWSNFQADPQEIRVLWEMKKDRLKYGFKPFIWQVGGKFTWPLDKDNFEYHYPRGFDDCFTIEPDLPFKSFL</sequence>
<organism>
    <name type="scientific">Escherichia coli O45:K1 (strain S88 / ExPEC)</name>
    <dbReference type="NCBI Taxonomy" id="585035"/>
    <lineage>
        <taxon>Bacteria</taxon>
        <taxon>Pseudomonadati</taxon>
        <taxon>Pseudomonadota</taxon>
        <taxon>Gammaproteobacteria</taxon>
        <taxon>Enterobacterales</taxon>
        <taxon>Enterobacteriaceae</taxon>
        <taxon>Escherichia</taxon>
    </lineage>
</organism>
<accession>B7MLJ7</accession>
<feature type="chain" id="PRO_1000140091" description="Probable L-ascorbate-6-phosphate lactonase UlaG">
    <location>
        <begin position="1"/>
        <end position="354"/>
    </location>
</feature>
<protein>
    <recommendedName>
        <fullName evidence="1">Probable L-ascorbate-6-phosphate lactonase UlaG</fullName>
        <ecNumber evidence="1">3.1.1.-</ecNumber>
    </recommendedName>
    <alternativeName>
        <fullName evidence="1">L-ascorbate utilization protein G</fullName>
    </alternativeName>
</protein>
<comment type="function">
    <text evidence="1">Probably catalyzes the hydrolysis of L-ascorbate-6-P into 3-keto-L-gulonate-6-P. Is essential for L-ascorbate utilization under anaerobic conditions.</text>
</comment>
<comment type="catalytic activity">
    <reaction evidence="1">
        <text>L-ascorbate 6-phosphate + H2O = 3-dehydro-L-gulonate 6-phosphate</text>
        <dbReference type="Rhea" id="RHEA:28803"/>
        <dbReference type="ChEBI" id="CHEBI:15377"/>
        <dbReference type="ChEBI" id="CHEBI:58774"/>
        <dbReference type="ChEBI" id="CHEBI:61698"/>
    </reaction>
</comment>
<comment type="cofactor">
    <cofactor evidence="1">
        <name>a divalent metal cation</name>
        <dbReference type="ChEBI" id="CHEBI:60240"/>
    </cofactor>
</comment>
<comment type="pathway">
    <text evidence="1">Cofactor degradation; L-ascorbate degradation; D-xylulose 5-phosphate from L-ascorbate: step 1/4.</text>
</comment>
<comment type="subcellular location">
    <subcellularLocation>
        <location evidence="1">Cytoplasm</location>
    </subcellularLocation>
</comment>
<comment type="induction">
    <text evidence="1">Induced by L-ascorbate. Repressed by UlaR.</text>
</comment>
<comment type="similarity">
    <text evidence="1">Belongs to the UlaG family.</text>
</comment>
<evidence type="ECO:0000255" key="1">
    <source>
        <dbReference type="HAMAP-Rule" id="MF_01266"/>
    </source>
</evidence>
<dbReference type="EC" id="3.1.1.-" evidence="1"/>
<dbReference type="EMBL" id="CU928161">
    <property type="protein sequence ID" value="CAR05927.1"/>
    <property type="molecule type" value="Genomic_DNA"/>
</dbReference>
<dbReference type="RefSeq" id="WP_001350385.1">
    <property type="nucleotide sequence ID" value="NC_011742.1"/>
</dbReference>
<dbReference type="SMR" id="B7MLJ7"/>
<dbReference type="KEGG" id="ecz:ECS88_4778"/>
<dbReference type="HOGENOM" id="CLU_074775_0_0_6"/>
<dbReference type="UniPathway" id="UPA00263">
    <property type="reaction ID" value="UER00377"/>
</dbReference>
<dbReference type="Proteomes" id="UP000000747">
    <property type="component" value="Chromosome"/>
</dbReference>
<dbReference type="GO" id="GO:0005737">
    <property type="term" value="C:cytoplasm"/>
    <property type="evidence" value="ECO:0007669"/>
    <property type="project" value="UniProtKB-SubCell"/>
</dbReference>
<dbReference type="GO" id="GO:0035460">
    <property type="term" value="F:L-ascorbate 6-phosphate lactonase activity"/>
    <property type="evidence" value="ECO:0007669"/>
    <property type="project" value="InterPro"/>
</dbReference>
<dbReference type="GO" id="GO:0030145">
    <property type="term" value="F:manganese ion binding"/>
    <property type="evidence" value="ECO:0007669"/>
    <property type="project" value="InterPro"/>
</dbReference>
<dbReference type="GO" id="GO:0019854">
    <property type="term" value="P:L-ascorbic acid catabolic process"/>
    <property type="evidence" value="ECO:0007669"/>
    <property type="project" value="UniProtKB-UniRule"/>
</dbReference>
<dbReference type="CDD" id="cd16284">
    <property type="entry name" value="UlaG-like_MBL-fold"/>
    <property type="match status" value="1"/>
</dbReference>
<dbReference type="FunFam" id="3.60.15.10:FF:000004">
    <property type="entry name" value="Probable L-ascorbate-6-phosphate lactonase UlaG"/>
    <property type="match status" value="1"/>
</dbReference>
<dbReference type="Gene3D" id="3.60.15.10">
    <property type="entry name" value="Ribonuclease Z/Hydroxyacylglutathione hydrolase-like"/>
    <property type="match status" value="1"/>
</dbReference>
<dbReference type="HAMAP" id="MF_01266">
    <property type="entry name" value="UlaG"/>
    <property type="match status" value="1"/>
</dbReference>
<dbReference type="InterPro" id="IPR023951">
    <property type="entry name" value="L-ascorbate_6P_UlaG"/>
</dbReference>
<dbReference type="InterPro" id="IPR001279">
    <property type="entry name" value="Metallo-B-lactamas"/>
</dbReference>
<dbReference type="InterPro" id="IPR036866">
    <property type="entry name" value="RibonucZ/Hydroxyglut_hydro"/>
</dbReference>
<dbReference type="InterPro" id="IPR048021">
    <property type="entry name" value="UlaG-like_MBL-fold"/>
</dbReference>
<dbReference type="InterPro" id="IPR050114">
    <property type="entry name" value="UPF0173_UPF0282_UlaG_hydrolase"/>
</dbReference>
<dbReference type="NCBIfam" id="NF008688">
    <property type="entry name" value="PRK11709.1"/>
    <property type="match status" value="1"/>
</dbReference>
<dbReference type="PANTHER" id="PTHR43546:SF9">
    <property type="entry name" value="L-ASCORBATE-6-PHOSPHATE LACTONASE ULAG-RELATED"/>
    <property type="match status" value="1"/>
</dbReference>
<dbReference type="PANTHER" id="PTHR43546">
    <property type="entry name" value="UPF0173 METAL-DEPENDENT HYDROLASE MJ1163-RELATED"/>
    <property type="match status" value="1"/>
</dbReference>
<dbReference type="Pfam" id="PF12706">
    <property type="entry name" value="Lactamase_B_2"/>
    <property type="match status" value="1"/>
</dbReference>
<dbReference type="SUPFAM" id="SSF56281">
    <property type="entry name" value="Metallo-hydrolase/oxidoreductase"/>
    <property type="match status" value="1"/>
</dbReference>
<reference key="1">
    <citation type="journal article" date="2009" name="PLoS Genet.">
        <title>Organised genome dynamics in the Escherichia coli species results in highly diverse adaptive paths.</title>
        <authorList>
            <person name="Touchon M."/>
            <person name="Hoede C."/>
            <person name="Tenaillon O."/>
            <person name="Barbe V."/>
            <person name="Baeriswyl S."/>
            <person name="Bidet P."/>
            <person name="Bingen E."/>
            <person name="Bonacorsi S."/>
            <person name="Bouchier C."/>
            <person name="Bouvet O."/>
            <person name="Calteau A."/>
            <person name="Chiapello H."/>
            <person name="Clermont O."/>
            <person name="Cruveiller S."/>
            <person name="Danchin A."/>
            <person name="Diard M."/>
            <person name="Dossat C."/>
            <person name="Karoui M.E."/>
            <person name="Frapy E."/>
            <person name="Garry L."/>
            <person name="Ghigo J.M."/>
            <person name="Gilles A.M."/>
            <person name="Johnson J."/>
            <person name="Le Bouguenec C."/>
            <person name="Lescat M."/>
            <person name="Mangenot S."/>
            <person name="Martinez-Jehanne V."/>
            <person name="Matic I."/>
            <person name="Nassif X."/>
            <person name="Oztas S."/>
            <person name="Petit M.A."/>
            <person name="Pichon C."/>
            <person name="Rouy Z."/>
            <person name="Ruf C.S."/>
            <person name="Schneider D."/>
            <person name="Tourret J."/>
            <person name="Vacherie B."/>
            <person name="Vallenet D."/>
            <person name="Medigue C."/>
            <person name="Rocha E.P.C."/>
            <person name="Denamur E."/>
        </authorList>
    </citation>
    <scope>NUCLEOTIDE SEQUENCE [LARGE SCALE GENOMIC DNA]</scope>
    <source>
        <strain>S88 / ExPEC</strain>
    </source>
</reference>
<proteinExistence type="inferred from homology"/>
<name>ULAG_ECO45</name>
<gene>
    <name evidence="1" type="primary">ulaG</name>
    <name type="ordered locus">ECS88_4778</name>
</gene>